<sequence length="640" mass="70415">MSSIGIDLGTTYSCVGVWQNDRVEIIANDQGNRTTPSYVAFTDTERLIGDAAKNQVAMNPTNTVFDAKRLIGRKFSDKEVQSDMKHWPFKVIPKDGDKPHIQVEFKGETKVFSPEEISSMVLLKMKETAEAYLGKTINNAVITVPAYFNDSQRQATKDAGTISKLNVQRIINEPTAAAIAYGLEKKGSGEKNILIFDLGGGTFDVSLLTIEDGVFEVKATAGDTHLGGEDFDNRLVSHFVDEFKRKHKKDIMGNQRAVRRLRTACERAKRTLSSSAQASIEIDSLFEGIDFYTSITRARFEELCADLFRGCLDPVEKVLKDSKLDKKSIHEIVLVGGSTRIPKVQQLLQEFFNGKELNKSINPDEAVAYGAAVQAAILSNEGGAKVADLLLLDVAPLSMGLETAGGVMTTLIPRNTTIPCKKTQTFSTYSDNQPGVLIQVYEGERAMTKDNNLLGKFELSGIPPAPRGVPQVEVTFDVDANGILNVSAEDKSTGNKQKITITNDKGRLSKEEIEKMVADAEKFKQQDEQQKDRVESKNKLENYAFTVKNSIKDEKVAAKISDSDKSTIESETESVLKWLESNQTAEKDEYEDKMKALEAVVNPIMSKLYQEGGMPQGGGMPGGMSNDSPKSSNNKVDELD</sequence>
<name>HS7C1_DICDI</name>
<gene>
    <name type="primary">hspB</name>
    <name type="synonym">hsc70</name>
    <name type="ORF">DDB_G0269144</name>
</gene>
<comment type="function">
    <text evidence="3 4">Affects actin polymerization through interaction with the actin-binding protein CAP32/34 (acpA/acpB). Acts as a chaperone by stimulating the refolding of denaturated acpA and acpB, but neither stimulates nor inhibits the capping activity of native CAP32/34.</text>
</comment>
<comment type="subunit">
    <text evidence="3">Interacts with the heterodimeric F-actin-capping protein CAP32/34 (acpA/acpB). Binds via its C-terminal tail and interaction is ATP-dependent.</text>
</comment>
<comment type="subcellular location">
    <subcellularLocation>
        <location>Cytoplasm</location>
    </subcellularLocation>
    <text>Found in F-actin-rich regions of the cell cortex and cell protrusions.</text>
</comment>
<comment type="developmental stage">
    <text evidence="2">Heat shock cognate proteins are expressed constitutively during normal development. Up-regulated in aspidocytes, a resistant cell type induced from amoebae by a range of toxins including heavy metals and antibiotics.</text>
</comment>
<comment type="similarity">
    <text evidence="5">Belongs to the heat shock protein 70 family.</text>
</comment>
<keyword id="KW-0067">ATP-binding</keyword>
<keyword id="KW-0143">Chaperone</keyword>
<keyword id="KW-0963">Cytoplasm</keyword>
<keyword id="KW-0903">Direct protein sequencing</keyword>
<keyword id="KW-0547">Nucleotide-binding</keyword>
<keyword id="KW-1185">Reference proteome</keyword>
<dbReference type="EMBL" id="X75263">
    <property type="protein sequence ID" value="CAA53039.1"/>
    <property type="molecule type" value="mRNA"/>
</dbReference>
<dbReference type="EMBL" id="L22736">
    <property type="protein sequence ID" value="AAA33219.1"/>
    <property type="molecule type" value="mRNA"/>
</dbReference>
<dbReference type="EMBL" id="AAFI02000005">
    <property type="protein sequence ID" value="EAL71922.1"/>
    <property type="molecule type" value="Genomic_DNA"/>
</dbReference>
<dbReference type="PIR" id="A48872">
    <property type="entry name" value="A48872"/>
</dbReference>
<dbReference type="PIR" id="S37394">
    <property type="entry name" value="S37394"/>
</dbReference>
<dbReference type="RefSeq" id="XP_646617.1">
    <property type="nucleotide sequence ID" value="XM_641525.1"/>
</dbReference>
<dbReference type="SMR" id="P36415"/>
<dbReference type="FunCoup" id="P36415">
    <property type="interactions" value="458"/>
</dbReference>
<dbReference type="STRING" id="44689.P36415"/>
<dbReference type="PaxDb" id="44689-DDB0191168"/>
<dbReference type="EnsemblProtists" id="EAL71922">
    <property type="protein sequence ID" value="EAL71922"/>
    <property type="gene ID" value="DDB_G0269144"/>
</dbReference>
<dbReference type="GeneID" id="8617589"/>
<dbReference type="KEGG" id="ddi:DDB_G0269144"/>
<dbReference type="dictyBase" id="DDB_G0269144">
    <property type="gene designation" value="hspB"/>
</dbReference>
<dbReference type="VEuPathDB" id="AmoebaDB:DDB_G0269144"/>
<dbReference type="eggNOG" id="KOG0101">
    <property type="taxonomic scope" value="Eukaryota"/>
</dbReference>
<dbReference type="HOGENOM" id="CLU_005965_0_0_1"/>
<dbReference type="InParanoid" id="P36415"/>
<dbReference type="OMA" id="AYTKNQD"/>
<dbReference type="PhylomeDB" id="P36415"/>
<dbReference type="Reactome" id="R-DDI-3371453">
    <property type="pathway name" value="Regulation of HSF1-mediated heat shock response"/>
</dbReference>
<dbReference type="Reactome" id="R-DDI-3371497">
    <property type="pathway name" value="HSP90 chaperone cycle for steroid hormone receptors (SHR) in the presence of ligand"/>
</dbReference>
<dbReference type="Reactome" id="R-DDI-3371571">
    <property type="pathway name" value="HSF1-dependent transactivation"/>
</dbReference>
<dbReference type="Reactome" id="R-DDI-450408">
    <property type="pathway name" value="AUF1 (hnRNP D0) binds and destabilizes mRNA"/>
</dbReference>
<dbReference type="Reactome" id="R-DDI-6798695">
    <property type="pathway name" value="Neutrophil degranulation"/>
</dbReference>
<dbReference type="Reactome" id="R-DDI-72163">
    <property type="pathway name" value="mRNA Splicing - Major Pathway"/>
</dbReference>
<dbReference type="Reactome" id="R-DDI-8876725">
    <property type="pathway name" value="Protein methylation"/>
</dbReference>
<dbReference type="Reactome" id="R-DDI-9841251">
    <property type="pathway name" value="Mitochondrial unfolded protein response (UPRmt)"/>
</dbReference>
<dbReference type="PRO" id="PR:P36415"/>
<dbReference type="Proteomes" id="UP000002195">
    <property type="component" value="Chromosome 1"/>
</dbReference>
<dbReference type="GO" id="GO:0005737">
    <property type="term" value="C:cytoplasm"/>
    <property type="evidence" value="ECO:0000318"/>
    <property type="project" value="GO_Central"/>
</dbReference>
<dbReference type="GO" id="GO:0005829">
    <property type="term" value="C:cytosol"/>
    <property type="evidence" value="ECO:0000314"/>
    <property type="project" value="dictyBase"/>
</dbReference>
<dbReference type="GO" id="GO:0031012">
    <property type="term" value="C:extracellular matrix"/>
    <property type="evidence" value="ECO:0007005"/>
    <property type="project" value="dictyBase"/>
</dbReference>
<dbReference type="GO" id="GO:0051015">
    <property type="term" value="F:actin filament binding"/>
    <property type="evidence" value="ECO:0000314"/>
    <property type="project" value="dictyBase"/>
</dbReference>
<dbReference type="GO" id="GO:0005524">
    <property type="term" value="F:ATP binding"/>
    <property type="evidence" value="ECO:0007669"/>
    <property type="project" value="UniProtKB-KW"/>
</dbReference>
<dbReference type="GO" id="GO:0016887">
    <property type="term" value="F:ATP hydrolysis activity"/>
    <property type="evidence" value="ECO:0000318"/>
    <property type="project" value="GO_Central"/>
</dbReference>
<dbReference type="GO" id="GO:0140662">
    <property type="term" value="F:ATP-dependent protein folding chaperone"/>
    <property type="evidence" value="ECO:0007669"/>
    <property type="project" value="InterPro"/>
</dbReference>
<dbReference type="GO" id="GO:0031072">
    <property type="term" value="F:heat shock protein binding"/>
    <property type="evidence" value="ECO:0000318"/>
    <property type="project" value="GO_Central"/>
</dbReference>
<dbReference type="GO" id="GO:0044183">
    <property type="term" value="F:protein folding chaperone"/>
    <property type="evidence" value="ECO:0000318"/>
    <property type="project" value="GO_Central"/>
</dbReference>
<dbReference type="GO" id="GO:0051085">
    <property type="term" value="P:chaperone cofactor-dependent protein refolding"/>
    <property type="evidence" value="ECO:0000318"/>
    <property type="project" value="GO_Central"/>
</dbReference>
<dbReference type="GO" id="GO:0042026">
    <property type="term" value="P:protein refolding"/>
    <property type="evidence" value="ECO:0000318"/>
    <property type="project" value="GO_Central"/>
</dbReference>
<dbReference type="CDD" id="cd10233">
    <property type="entry name" value="ASKHA_NBD_HSP70_HSPA1"/>
    <property type="match status" value="1"/>
</dbReference>
<dbReference type="FunFam" id="2.60.34.10:FF:000002">
    <property type="entry name" value="Heat shock 70 kDa"/>
    <property type="match status" value="1"/>
</dbReference>
<dbReference type="FunFam" id="3.30.420.40:FF:000172">
    <property type="entry name" value="Heat shock 70 kDa protein"/>
    <property type="match status" value="2"/>
</dbReference>
<dbReference type="FunFam" id="3.30.30.30:FF:000001">
    <property type="entry name" value="heat shock 70 kDa protein-like"/>
    <property type="match status" value="1"/>
</dbReference>
<dbReference type="FunFam" id="1.20.1270.10:FF:000068">
    <property type="entry name" value="Heat shock cognate 70 kDa protein 2"/>
    <property type="match status" value="1"/>
</dbReference>
<dbReference type="FunFam" id="3.90.640.10:FF:000134">
    <property type="entry name" value="Heat shock cognate 71 kDa protein"/>
    <property type="match status" value="1"/>
</dbReference>
<dbReference type="FunFam" id="3.30.420.40:FF:000026">
    <property type="entry name" value="Heat shock protein 70"/>
    <property type="match status" value="1"/>
</dbReference>
<dbReference type="Gene3D" id="1.20.1270.10">
    <property type="match status" value="1"/>
</dbReference>
<dbReference type="Gene3D" id="3.30.30.30">
    <property type="match status" value="1"/>
</dbReference>
<dbReference type="Gene3D" id="3.30.420.40">
    <property type="match status" value="2"/>
</dbReference>
<dbReference type="Gene3D" id="3.90.640.10">
    <property type="entry name" value="Actin, Chain A, domain 4"/>
    <property type="match status" value="1"/>
</dbReference>
<dbReference type="Gene3D" id="2.60.34.10">
    <property type="entry name" value="Substrate Binding Domain Of DNAk, Chain A, domain 1"/>
    <property type="match status" value="1"/>
</dbReference>
<dbReference type="InterPro" id="IPR043129">
    <property type="entry name" value="ATPase_NBD"/>
</dbReference>
<dbReference type="InterPro" id="IPR018181">
    <property type="entry name" value="Heat_shock_70_CS"/>
</dbReference>
<dbReference type="InterPro" id="IPR029048">
    <property type="entry name" value="HSP70_C_sf"/>
</dbReference>
<dbReference type="InterPro" id="IPR029047">
    <property type="entry name" value="HSP70_peptide-bd_sf"/>
</dbReference>
<dbReference type="InterPro" id="IPR013126">
    <property type="entry name" value="Hsp_70_fam"/>
</dbReference>
<dbReference type="NCBIfam" id="NF001413">
    <property type="entry name" value="PRK00290.1"/>
    <property type="match status" value="1"/>
</dbReference>
<dbReference type="PANTHER" id="PTHR19375">
    <property type="entry name" value="HEAT SHOCK PROTEIN 70KDA"/>
    <property type="match status" value="1"/>
</dbReference>
<dbReference type="Pfam" id="PF00012">
    <property type="entry name" value="HSP70"/>
    <property type="match status" value="1"/>
</dbReference>
<dbReference type="PRINTS" id="PR00301">
    <property type="entry name" value="HEATSHOCK70"/>
</dbReference>
<dbReference type="SUPFAM" id="SSF53067">
    <property type="entry name" value="Actin-like ATPase domain"/>
    <property type="match status" value="2"/>
</dbReference>
<dbReference type="SUPFAM" id="SSF100934">
    <property type="entry name" value="Heat shock protein 70kD (HSP70), C-terminal subdomain"/>
    <property type="match status" value="1"/>
</dbReference>
<dbReference type="SUPFAM" id="SSF100920">
    <property type="entry name" value="Heat shock protein 70kD (HSP70), peptide-binding domain"/>
    <property type="match status" value="1"/>
</dbReference>
<dbReference type="PROSITE" id="PS00297">
    <property type="entry name" value="HSP70_1"/>
    <property type="match status" value="1"/>
</dbReference>
<dbReference type="PROSITE" id="PS00329">
    <property type="entry name" value="HSP70_2"/>
    <property type="match status" value="1"/>
</dbReference>
<dbReference type="PROSITE" id="PS01036">
    <property type="entry name" value="HSP70_3"/>
    <property type="match status" value="1"/>
</dbReference>
<feature type="chain" id="PRO_0000078300" description="Heat shock cognate 70 kDa protein 1">
    <location>
        <begin position="1"/>
        <end position="640"/>
    </location>
</feature>
<feature type="region of interest" description="Disordered" evidence="1">
    <location>
        <begin position="609"/>
        <end position="640"/>
    </location>
</feature>
<feature type="compositionally biased region" description="Polar residues" evidence="1">
    <location>
        <begin position="625"/>
        <end position="634"/>
    </location>
</feature>
<feature type="sequence conflict" description="In Ref. 2; AAA33219." evidence="5" ref="2">
    <original>MSSIGIDLGTTYSCVGVWQNDRVEIIAND</original>
    <variation>IHHHINGNATWVVESGPVSEVLSFN</variation>
    <location>
        <begin position="1"/>
        <end position="29"/>
    </location>
</feature>
<feature type="sequence conflict" description="In Ref. 2; AAA33219." evidence="5" ref="2">
    <original>N</original>
    <variation>T</variation>
    <location>
        <position position="32"/>
    </location>
</feature>
<feature type="sequence conflict" description="In Ref. 2; AAA33219." evidence="5" ref="2">
    <original>V</original>
    <variation>A</variation>
    <location>
        <position position="64"/>
    </location>
</feature>
<feature type="sequence conflict" description="In Ref. 1; CAA53039." evidence="5" ref="1">
    <original>A</original>
    <variation>R</variation>
    <location>
        <position position="180"/>
    </location>
</feature>
<feature type="sequence conflict" description="In Ref. 2; AAA33219." evidence="5" ref="2">
    <original>S</original>
    <variation>A</variation>
    <location>
        <position position="237"/>
    </location>
</feature>
<feature type="sequence conflict" description="In Ref. 2; AAA33219." evidence="5" ref="2">
    <original>V</original>
    <variation>A</variation>
    <location>
        <position position="240"/>
    </location>
</feature>
<feature type="sequence conflict" description="In Ref. 2; AAA33219." evidence="5" ref="2">
    <original>I</original>
    <variation>L</variation>
    <location>
        <position position="341"/>
    </location>
</feature>
<feature type="sequence conflict" description="In Ref. 2; AAA33219." evidence="5" ref="2">
    <original>F</original>
    <variation>P</variation>
    <location>
        <position position="352"/>
    </location>
</feature>
<reference key="1">
    <citation type="journal article" date="1993" name="EMBO J.">
        <title>The heat shock cognate protein from Dictyostelium affects actin polymerization through interaction with the actin-binding protein cap32/34.</title>
        <authorList>
            <person name="Haus U."/>
            <person name="Trommler P."/>
            <person name="Fisher P.R."/>
            <person name="Hartmann H."/>
            <person name="Lottspeich F."/>
            <person name="Noegel A.A."/>
            <person name="Schleicher M."/>
        </authorList>
    </citation>
    <scope>NUCLEOTIDE SEQUENCE [MRNA]</scope>
    <scope>INTERACTION WITH ACPA AND ACPB</scope>
    <scope>FUNCTION</scope>
    <source>
        <strain>AX3</strain>
    </source>
</reference>
<reference key="2">
    <citation type="journal article" date="1993" name="J. Biol. Chem.">
        <title>Aginactin, an agonist-regulated F-actin capping activity is associated with an Hsc70 in Dictyostelium.</title>
        <authorList>
            <person name="Eddy R.J."/>
            <person name="Sauterer R.A."/>
            <person name="Condeelis J.S."/>
        </authorList>
    </citation>
    <scope>NUCLEOTIDE SEQUENCE [MRNA]</scope>
    <scope>PROTEIN SEQUENCE OF 34-46; 102-106 AND 298-309</scope>
    <source>
        <strain>AX3</strain>
    </source>
</reference>
<reference key="3">
    <citation type="journal article" date="2005" name="Nature">
        <title>The genome of the social amoeba Dictyostelium discoideum.</title>
        <authorList>
            <person name="Eichinger L."/>
            <person name="Pachebat J.A."/>
            <person name="Gloeckner G."/>
            <person name="Rajandream M.A."/>
            <person name="Sucgang R."/>
            <person name="Berriman M."/>
            <person name="Song J."/>
            <person name="Olsen R."/>
            <person name="Szafranski K."/>
            <person name="Xu Q."/>
            <person name="Tunggal B."/>
            <person name="Kummerfeld S."/>
            <person name="Madera M."/>
            <person name="Konfortov B.A."/>
            <person name="Rivero F."/>
            <person name="Bankier A.T."/>
            <person name="Lehmann R."/>
            <person name="Hamlin N."/>
            <person name="Davies R."/>
            <person name="Gaudet P."/>
            <person name="Fey P."/>
            <person name="Pilcher K."/>
            <person name="Chen G."/>
            <person name="Saunders D."/>
            <person name="Sodergren E.J."/>
            <person name="Davis P."/>
            <person name="Kerhornou A."/>
            <person name="Nie X."/>
            <person name="Hall N."/>
            <person name="Anjard C."/>
            <person name="Hemphill L."/>
            <person name="Bason N."/>
            <person name="Farbrother P."/>
            <person name="Desany B."/>
            <person name="Just E."/>
            <person name="Morio T."/>
            <person name="Rost R."/>
            <person name="Churcher C.M."/>
            <person name="Cooper J."/>
            <person name="Haydock S."/>
            <person name="van Driessche N."/>
            <person name="Cronin A."/>
            <person name="Goodhead I."/>
            <person name="Muzny D.M."/>
            <person name="Mourier T."/>
            <person name="Pain A."/>
            <person name="Lu M."/>
            <person name="Harper D."/>
            <person name="Lindsay R."/>
            <person name="Hauser H."/>
            <person name="James K.D."/>
            <person name="Quiles M."/>
            <person name="Madan Babu M."/>
            <person name="Saito T."/>
            <person name="Buchrieser C."/>
            <person name="Wardroper A."/>
            <person name="Felder M."/>
            <person name="Thangavelu M."/>
            <person name="Johnson D."/>
            <person name="Knights A."/>
            <person name="Loulseged H."/>
            <person name="Mungall K.L."/>
            <person name="Oliver K."/>
            <person name="Price C."/>
            <person name="Quail M.A."/>
            <person name="Urushihara H."/>
            <person name="Hernandez J."/>
            <person name="Rabbinowitsch E."/>
            <person name="Steffen D."/>
            <person name="Sanders M."/>
            <person name="Ma J."/>
            <person name="Kohara Y."/>
            <person name="Sharp S."/>
            <person name="Simmonds M.N."/>
            <person name="Spiegler S."/>
            <person name="Tivey A."/>
            <person name="Sugano S."/>
            <person name="White B."/>
            <person name="Walker D."/>
            <person name="Woodward J.R."/>
            <person name="Winckler T."/>
            <person name="Tanaka Y."/>
            <person name="Shaulsky G."/>
            <person name="Schleicher M."/>
            <person name="Weinstock G.M."/>
            <person name="Rosenthal A."/>
            <person name="Cox E.C."/>
            <person name="Chisholm R.L."/>
            <person name="Gibbs R.A."/>
            <person name="Loomis W.F."/>
            <person name="Platzer M."/>
            <person name="Kay R.R."/>
            <person name="Williams J.G."/>
            <person name="Dear P.H."/>
            <person name="Noegel A.A."/>
            <person name="Barrell B.G."/>
            <person name="Kuspa A."/>
        </authorList>
    </citation>
    <scope>NUCLEOTIDE SEQUENCE [LARGE SCALE GENOMIC DNA]</scope>
    <source>
        <strain>AX4</strain>
    </source>
</reference>
<reference key="4">
    <citation type="journal article" date="1996" name="Biochim. Biophys. Acta">
        <title>A major agonist-regulated capping activity in Dictyostelium is due to the capping protein, cap32/34.</title>
        <authorList>
            <person name="Eddy R.J."/>
            <person name="Han J."/>
            <person name="Sauterer R.A."/>
            <person name="Condeelis J.S."/>
        </authorList>
    </citation>
    <scope>FUNCTION</scope>
</reference>
<reference key="5">
    <citation type="journal article" date="2006" name="Eur. J. Cell Biol.">
        <title>Identification and isolation of Dictyostelium microtubule-associated protein interactors by tandem affinity purification.</title>
        <authorList>
            <person name="Koch K.V."/>
            <person name="Reinders Y."/>
            <person name="Ho T.-H."/>
            <person name="Sickmann A."/>
            <person name="Graef R."/>
        </authorList>
    </citation>
    <scope>IDENTIFICATION BY MASS SPECTROMETRY [LARGE SCALE ANALYSIS]</scope>
    <source>
        <strain>AX2</strain>
    </source>
</reference>
<reference key="6">
    <citation type="journal article" date="2006" name="Mol. Cell. Proteomics">
        <title>Proteomics fingerprinting of phagosome maturation and evidence for the role of a Galpha during uptake.</title>
        <authorList>
            <person name="Gotthardt D."/>
            <person name="Blancheteau V."/>
            <person name="Bosserhoff A."/>
            <person name="Ruppert T."/>
            <person name="Delorenzi M."/>
            <person name="Soldati T."/>
        </authorList>
    </citation>
    <scope>IDENTIFICATION BY MASS SPECTROMETRY [LARGE SCALE ANALYSIS]</scope>
    <source>
        <strain>AX2</strain>
    </source>
</reference>
<reference key="7">
    <citation type="journal article" date="2007" name="Microbiology">
        <title>A new environmentally resistant cell type from Dictyostelium.</title>
        <authorList>
            <person name="Serafimidis I."/>
            <person name="Bloomfield G."/>
            <person name="Skelton J."/>
            <person name="Ivens A."/>
            <person name="Kay R.R."/>
        </authorList>
    </citation>
    <scope>DEVELOPMENTAL STAGE</scope>
</reference>
<accession>P36415</accession>
<accession>Q55C64</accession>
<proteinExistence type="evidence at protein level"/>
<evidence type="ECO:0000256" key="1">
    <source>
        <dbReference type="SAM" id="MobiDB-lite"/>
    </source>
</evidence>
<evidence type="ECO:0000269" key="2">
    <source>
    </source>
</evidence>
<evidence type="ECO:0000269" key="3">
    <source>
    </source>
</evidence>
<evidence type="ECO:0000269" key="4">
    <source>
    </source>
</evidence>
<evidence type="ECO:0000305" key="5"/>
<organism>
    <name type="scientific">Dictyostelium discoideum</name>
    <name type="common">Social amoeba</name>
    <dbReference type="NCBI Taxonomy" id="44689"/>
    <lineage>
        <taxon>Eukaryota</taxon>
        <taxon>Amoebozoa</taxon>
        <taxon>Evosea</taxon>
        <taxon>Eumycetozoa</taxon>
        <taxon>Dictyostelia</taxon>
        <taxon>Dictyosteliales</taxon>
        <taxon>Dictyosteliaceae</taxon>
        <taxon>Dictyostelium</taxon>
    </lineage>
</organism>
<protein>
    <recommendedName>
        <fullName>Heat shock cognate 70 kDa protein 1</fullName>
        <shortName>HSC70-1</shortName>
    </recommendedName>
</protein>